<evidence type="ECO:0000269" key="1">
    <source>
    </source>
</evidence>
<evidence type="ECO:0000303" key="2">
    <source>
    </source>
</evidence>
<evidence type="ECO:0000305" key="3"/>
<evidence type="ECO:0000305" key="4">
    <source>
    </source>
</evidence>
<evidence type="ECO:0007744" key="5">
    <source>
        <dbReference type="PDB" id="7PZY"/>
    </source>
</evidence>
<evidence type="ECO:0007744" key="6">
    <source>
        <dbReference type="PDB" id="7Q0F"/>
    </source>
</evidence>
<evidence type="ECO:0007744" key="7">
    <source>
        <dbReference type="PDB" id="7Q0P"/>
    </source>
</evidence>
<accession>A0A1D8PN83</accession>
<comment type="function">
    <text evidence="4">Component of the ribosome, a large ribonucleoprotein complex responsible for the synthesis of proteins in the cell. The small ribosomal subunit (SSU) binds messenger RNAs (mRNAs) and translates the encoded message by selecting cognate aminoacyl-transfer RNA (tRNA) molecules. The large subunit (LSU) contains the ribosomal catalytic site termed the peptidyl transferase center (PTC), which catalyzes the formation of peptide bonds, thereby polymerizing the amino acids delivered by tRNAs into a polypeptide chain. The nascent polypeptides leave the ribosome through a tunnel in the LSU and interact with protein factors that function in enzymatic processing, targeting, and the membrane insertion of nascent chains at the exit of the ribosomal tunnel.</text>
</comment>
<comment type="subunit">
    <text evidence="1">Component of the small ribosomal subunit (PubMed:35613268). Mature ribosomes consist of a small (40S) and a large (60S) subunit (PubMed:35613268). The 40S subunit contains about 32 different proteins and 1 molecule of RNA (18S) (PubMed:35613268). The 60S subunit contains 45 different proteins and 3 molecules of RNA (25S, 5.8S and 5S) (PubMed:35613268).</text>
</comment>
<comment type="subcellular location">
    <subcellularLocation>
        <location evidence="4">Cytoplasm</location>
    </subcellularLocation>
</comment>
<comment type="similarity">
    <text evidence="3">Belongs to the universal ribosomal protein uS17 family.</text>
</comment>
<keyword id="KW-0002">3D-structure</keyword>
<keyword id="KW-0963">Cytoplasm</keyword>
<keyword id="KW-1185">Reference proteome</keyword>
<keyword id="KW-0687">Ribonucleoprotein</keyword>
<keyword id="KW-0689">Ribosomal protein</keyword>
<gene>
    <name type="ordered locus">orf19.4149.1</name>
    <name type="ORF">CAALFM_C501540WA</name>
</gene>
<dbReference type="EMBL" id="CP017627">
    <property type="protein sequence ID" value="AOW29587.1"/>
    <property type="molecule type" value="Genomic_DNA"/>
</dbReference>
<dbReference type="RefSeq" id="XP_019330957.1">
    <property type="nucleotide sequence ID" value="XM_019475412.1"/>
</dbReference>
<dbReference type="PDB" id="7PZY">
    <property type="method" value="EM"/>
    <property type="resolution" value="2.32 A"/>
    <property type="chains" value="M=1-155"/>
</dbReference>
<dbReference type="PDB" id="7Q08">
    <property type="method" value="EM"/>
    <property type="resolution" value="2.56 A"/>
    <property type="chains" value="M=1-155"/>
</dbReference>
<dbReference type="PDB" id="7Q0F">
    <property type="method" value="EM"/>
    <property type="resolution" value="2.64 A"/>
    <property type="chains" value="M=1-155"/>
</dbReference>
<dbReference type="PDB" id="7Q0P">
    <property type="method" value="EM"/>
    <property type="resolution" value="2.77 A"/>
    <property type="chains" value="M=1-155"/>
</dbReference>
<dbReference type="PDB" id="7Q0R">
    <property type="method" value="EM"/>
    <property type="resolution" value="2.67 A"/>
    <property type="chains" value="M=1-155"/>
</dbReference>
<dbReference type="PDB" id="8C3A">
    <property type="method" value="X-ray"/>
    <property type="resolution" value="3.00 A"/>
    <property type="chains" value="CY/N=1-155"/>
</dbReference>
<dbReference type="PDB" id="8CQ7">
    <property type="method" value="X-ray"/>
    <property type="resolution" value="3.20 A"/>
    <property type="chains" value="CY/N=1-155"/>
</dbReference>
<dbReference type="PDB" id="8CQW">
    <property type="method" value="X-ray"/>
    <property type="resolution" value="3.05 A"/>
    <property type="chains" value="CY/N=1-155"/>
</dbReference>
<dbReference type="PDB" id="8CRE">
    <property type="method" value="X-ray"/>
    <property type="resolution" value="3.00 A"/>
    <property type="chains" value="CY/N=1-155"/>
</dbReference>
<dbReference type="PDB" id="8OEQ">
    <property type="method" value="X-ray"/>
    <property type="resolution" value="3.30 A"/>
    <property type="chains" value="CY/N=1-155"/>
</dbReference>
<dbReference type="PDB" id="8OGJ">
    <property type="method" value="EM"/>
    <property type="resolution" value="3.10 A"/>
    <property type="chains" value="M=1-155"/>
</dbReference>
<dbReference type="PDB" id="8OH6">
    <property type="method" value="X-ray"/>
    <property type="resolution" value="3.35 A"/>
    <property type="chains" value="CY/N=1-155"/>
</dbReference>
<dbReference type="PDB" id="8OI5">
    <property type="method" value="X-ray"/>
    <property type="resolution" value="2.90 A"/>
    <property type="chains" value="CY/N=1-155"/>
</dbReference>
<dbReference type="PDB" id="8OJ3">
    <property type="method" value="X-ray"/>
    <property type="resolution" value="3.50 A"/>
    <property type="chains" value="CY/N=1-155"/>
</dbReference>
<dbReference type="PDB" id="8Q5I">
    <property type="method" value="EM"/>
    <property type="resolution" value="2.45 A"/>
    <property type="chains" value="M=1-155"/>
</dbReference>
<dbReference type="PDBsum" id="7PZY"/>
<dbReference type="PDBsum" id="7Q08"/>
<dbReference type="PDBsum" id="7Q0F"/>
<dbReference type="PDBsum" id="7Q0P"/>
<dbReference type="PDBsum" id="7Q0R"/>
<dbReference type="PDBsum" id="8C3A"/>
<dbReference type="PDBsum" id="8CQ7"/>
<dbReference type="PDBsum" id="8CQW"/>
<dbReference type="PDBsum" id="8CRE"/>
<dbReference type="PDBsum" id="8OEQ"/>
<dbReference type="PDBsum" id="8OGJ"/>
<dbReference type="PDBsum" id="8OH6"/>
<dbReference type="PDBsum" id="8OI5"/>
<dbReference type="PDBsum" id="8OJ3"/>
<dbReference type="PDBsum" id="8Q5I"/>
<dbReference type="EMDB" id="EMD-13737"/>
<dbReference type="EMDB" id="EMD-13741"/>
<dbReference type="EMDB" id="EMD-13744"/>
<dbReference type="EMDB" id="EMD-13749"/>
<dbReference type="EMDB" id="EMD-13750"/>
<dbReference type="EMDB" id="EMD-16874"/>
<dbReference type="SMR" id="A0A1D8PN83"/>
<dbReference type="FunCoup" id="A0A1D8PN83">
    <property type="interactions" value="1213"/>
</dbReference>
<dbReference type="STRING" id="237561.A0A1D8PN83"/>
<dbReference type="EnsemblFungi" id="C5_01540W_A-T">
    <property type="protein sequence ID" value="C5_01540W_A-T-p1"/>
    <property type="gene ID" value="C5_01540W_A"/>
</dbReference>
<dbReference type="GeneID" id="30515301"/>
<dbReference type="KEGG" id="cal:CAALFM_C501540WA"/>
<dbReference type="CGD" id="CAL0000187802">
    <property type="gene designation" value="orf19.4149.1"/>
</dbReference>
<dbReference type="VEuPathDB" id="FungiDB:C5_01540W_A"/>
<dbReference type="eggNOG" id="KOG1728">
    <property type="taxonomic scope" value="Eukaryota"/>
</dbReference>
<dbReference type="InParanoid" id="A0A1D8PN83"/>
<dbReference type="OrthoDB" id="10254436at2759"/>
<dbReference type="Proteomes" id="UP000000559">
    <property type="component" value="Chromosome 5"/>
</dbReference>
<dbReference type="GO" id="GO:0022627">
    <property type="term" value="C:cytosolic small ribosomal subunit"/>
    <property type="evidence" value="ECO:0000318"/>
    <property type="project" value="GO_Central"/>
</dbReference>
<dbReference type="GO" id="GO:0003735">
    <property type="term" value="F:structural constituent of ribosome"/>
    <property type="evidence" value="ECO:0000318"/>
    <property type="project" value="GO_Central"/>
</dbReference>
<dbReference type="GO" id="GO:0006412">
    <property type="term" value="P:translation"/>
    <property type="evidence" value="ECO:0007669"/>
    <property type="project" value="InterPro"/>
</dbReference>
<dbReference type="CDD" id="cd00364">
    <property type="entry name" value="Ribosomal_uS17"/>
    <property type="match status" value="1"/>
</dbReference>
<dbReference type="FunFam" id="2.40.50.1000:FF:000001">
    <property type="entry name" value="40S ribosomal protein S11"/>
    <property type="match status" value="1"/>
</dbReference>
<dbReference type="Gene3D" id="2.40.50.1000">
    <property type="match status" value="1"/>
</dbReference>
<dbReference type="InterPro" id="IPR012340">
    <property type="entry name" value="NA-bd_OB-fold"/>
</dbReference>
<dbReference type="InterPro" id="IPR000266">
    <property type="entry name" value="Ribosomal_uS17"/>
</dbReference>
<dbReference type="InterPro" id="IPR028333">
    <property type="entry name" value="Ribosomal_uS17_arc/euk"/>
</dbReference>
<dbReference type="InterPro" id="IPR019979">
    <property type="entry name" value="Ribosomal_uS17_CS"/>
</dbReference>
<dbReference type="InterPro" id="IPR032440">
    <property type="entry name" value="Ribosomal_uS17_N"/>
</dbReference>
<dbReference type="NCBIfam" id="NF006345">
    <property type="entry name" value="PRK08572.1"/>
    <property type="match status" value="1"/>
</dbReference>
<dbReference type="NCBIfam" id="TIGR03630">
    <property type="entry name" value="uS17_arch"/>
    <property type="match status" value="1"/>
</dbReference>
<dbReference type="PANTHER" id="PTHR10744">
    <property type="entry name" value="40S RIBOSOMAL PROTEIN S11 FAMILY MEMBER"/>
    <property type="match status" value="1"/>
</dbReference>
<dbReference type="PANTHER" id="PTHR10744:SF9">
    <property type="entry name" value="40S RIBOSOMAL PROTEIN S11-RELATED"/>
    <property type="match status" value="1"/>
</dbReference>
<dbReference type="Pfam" id="PF00366">
    <property type="entry name" value="Ribosomal_S17"/>
    <property type="match status" value="1"/>
</dbReference>
<dbReference type="Pfam" id="PF16205">
    <property type="entry name" value="Ribosomal_S17_N"/>
    <property type="match status" value="1"/>
</dbReference>
<dbReference type="PRINTS" id="PR00973">
    <property type="entry name" value="RIBOSOMALS17"/>
</dbReference>
<dbReference type="SUPFAM" id="SSF50249">
    <property type="entry name" value="Nucleic acid-binding proteins"/>
    <property type="match status" value="1"/>
</dbReference>
<dbReference type="PROSITE" id="PS00056">
    <property type="entry name" value="RIBOSOMAL_S17"/>
    <property type="match status" value="1"/>
</dbReference>
<sequence length="155" mass="17601">MATELTVQSERAFQKQPHIFTNPKAKANKKTKRWYKDVGLGFKTPKAAIEGSYIDKKCPFAGTVSIRGKILTGTVVSTKMHRTIIIRRDYLHYVPKYNRYEKRHKNVAAHVSPAFRVEEGDVVTVGQCRPISKTVRFNVLKVSAGASRSKKFSKF</sequence>
<protein>
    <recommendedName>
        <fullName evidence="2">Small ribosomal subunit protein uS17</fullName>
    </recommendedName>
    <alternativeName>
        <fullName>40S ribosomal protein S11A</fullName>
    </alternativeName>
</protein>
<name>RS11A_CANAL</name>
<feature type="chain" id="PRO_0000456549" description="Small ribosomal subunit protein uS17">
    <location>
        <begin position="1"/>
        <end position="155"/>
    </location>
</feature>
<organism>
    <name type="scientific">Candida albicans (strain SC5314 / ATCC MYA-2876)</name>
    <name type="common">Yeast</name>
    <dbReference type="NCBI Taxonomy" id="237561"/>
    <lineage>
        <taxon>Eukaryota</taxon>
        <taxon>Fungi</taxon>
        <taxon>Dikarya</taxon>
        <taxon>Ascomycota</taxon>
        <taxon>Saccharomycotina</taxon>
        <taxon>Pichiomycetes</taxon>
        <taxon>Debaryomycetaceae</taxon>
        <taxon>Candida/Lodderomyces clade</taxon>
        <taxon>Candida</taxon>
    </lineage>
</organism>
<proteinExistence type="evidence at protein level"/>
<reference key="1">
    <citation type="journal article" date="2004" name="Proc. Natl. Acad. Sci. U.S.A.">
        <title>The diploid genome sequence of Candida albicans.</title>
        <authorList>
            <person name="Jones T."/>
            <person name="Federspiel N.A."/>
            <person name="Chibana H."/>
            <person name="Dungan J."/>
            <person name="Kalman S."/>
            <person name="Magee B.B."/>
            <person name="Newport G."/>
            <person name="Thorstenson Y.R."/>
            <person name="Agabian N."/>
            <person name="Magee P.T."/>
            <person name="Davis R.W."/>
            <person name="Scherer S."/>
        </authorList>
    </citation>
    <scope>NUCLEOTIDE SEQUENCE [LARGE SCALE GENOMIC DNA]</scope>
    <source>
        <strain>SC5314 / ATCC MYA-2876</strain>
    </source>
</reference>
<reference key="2">
    <citation type="journal article" date="2007" name="Genome Biol.">
        <title>Assembly of the Candida albicans genome into sixteen supercontigs aligned on the eight chromosomes.</title>
        <authorList>
            <person name="van het Hoog M."/>
            <person name="Rast T.J."/>
            <person name="Martchenko M."/>
            <person name="Grindle S."/>
            <person name="Dignard D."/>
            <person name="Hogues H."/>
            <person name="Cuomo C."/>
            <person name="Berriman M."/>
            <person name="Scherer S."/>
            <person name="Magee B.B."/>
            <person name="Whiteway M."/>
            <person name="Chibana H."/>
            <person name="Nantel A."/>
            <person name="Magee P.T."/>
        </authorList>
    </citation>
    <scope>GENOME REANNOTATION</scope>
    <source>
        <strain>SC5314 / ATCC MYA-2876</strain>
    </source>
</reference>
<reference key="3">
    <citation type="journal article" date="2013" name="Genome Biol.">
        <title>Assembly of a phased diploid Candida albicans genome facilitates allele-specific measurements and provides a simple model for repeat and indel structure.</title>
        <authorList>
            <person name="Muzzey D."/>
            <person name="Schwartz K."/>
            <person name="Weissman J.S."/>
            <person name="Sherlock G."/>
        </authorList>
    </citation>
    <scope>NUCLEOTIDE SEQUENCE [LARGE SCALE GENOMIC DNA]</scope>
    <scope>GENOME REANNOTATION</scope>
    <source>
        <strain>SC5314 / ATCC MYA-2876</strain>
    </source>
</reference>
<reference evidence="5 6 7" key="4">
    <citation type="journal article" date="2022" name="Sci. Adv.">
        <title>E-site drug specificity of the human pathogen Candida albicans ribosome.</title>
        <authorList>
            <person name="Zgadzay Y."/>
            <person name="Kolosova O."/>
            <person name="Stetsenko A."/>
            <person name="Wu C."/>
            <person name="Bruchlen D."/>
            <person name="Usachev K."/>
            <person name="Validov S."/>
            <person name="Jenner L."/>
            <person name="Rogachev A."/>
            <person name="Yusupova G."/>
            <person name="Sachs M.S."/>
            <person name="Guskov A."/>
            <person name="Yusupov M."/>
        </authorList>
    </citation>
    <scope>STRUCTURE BY ELECTRON MICROSCOPY (2.32 ANGSTROMS) OF THE 80S RIBOSOME</scope>
    <scope>SUBUNIT</scope>
</reference>